<comment type="function">
    <text evidence="1">Required for the first step of histidine biosynthesis. May allow the feedback regulation of ATP phosphoribosyltransferase activity by histidine.</text>
</comment>
<comment type="pathway">
    <text evidence="1">Amino-acid biosynthesis; L-histidine biosynthesis; L-histidine from 5-phospho-alpha-D-ribose 1-diphosphate: step 1/9.</text>
</comment>
<comment type="subunit">
    <text evidence="1">Heteromultimer composed of HisG and HisZ subunits.</text>
</comment>
<comment type="subcellular location">
    <subcellularLocation>
        <location evidence="1">Cytoplasm</location>
    </subcellularLocation>
</comment>
<comment type="miscellaneous">
    <text>This function is generally fulfilled by the C-terminal part of HisG, which is missing in some bacteria such as this one.</text>
</comment>
<comment type="similarity">
    <text evidence="1">Belongs to the class-II aminoacyl-tRNA synthetase family. HisZ subfamily.</text>
</comment>
<proteinExistence type="inferred from homology"/>
<evidence type="ECO:0000255" key="1">
    <source>
        <dbReference type="HAMAP-Rule" id="MF_00125"/>
    </source>
</evidence>
<reference key="1">
    <citation type="submission" date="2007-06" db="EMBL/GenBank/DDBJ databases">
        <title>Complete sequence of Marinomonas sp. MWYL1.</title>
        <authorList>
            <consortium name="US DOE Joint Genome Institute"/>
            <person name="Copeland A."/>
            <person name="Lucas S."/>
            <person name="Lapidus A."/>
            <person name="Barry K."/>
            <person name="Glavina del Rio T."/>
            <person name="Dalin E."/>
            <person name="Tice H."/>
            <person name="Pitluck S."/>
            <person name="Kiss H."/>
            <person name="Brettin T."/>
            <person name="Bruce D."/>
            <person name="Detter J.C."/>
            <person name="Han C."/>
            <person name="Schmutz J."/>
            <person name="Larimer F."/>
            <person name="Land M."/>
            <person name="Hauser L."/>
            <person name="Kyrpides N."/>
            <person name="Kim E."/>
            <person name="Johnston A.W.B."/>
            <person name="Todd J.D."/>
            <person name="Rogers R."/>
            <person name="Wexler M."/>
            <person name="Bond P.L."/>
            <person name="Li Y."/>
            <person name="Richardson P."/>
        </authorList>
    </citation>
    <scope>NUCLEOTIDE SEQUENCE [LARGE SCALE GENOMIC DNA]</scope>
    <source>
        <strain>MWYL1</strain>
    </source>
</reference>
<keyword id="KW-0028">Amino-acid biosynthesis</keyword>
<keyword id="KW-0963">Cytoplasm</keyword>
<keyword id="KW-0368">Histidine biosynthesis</keyword>
<feature type="chain" id="PRO_1000076246" description="ATP phosphoribosyltransferase regulatory subunit">
    <location>
        <begin position="1"/>
        <end position="392"/>
    </location>
</feature>
<name>HISZ_MARMS</name>
<protein>
    <recommendedName>
        <fullName evidence="1">ATP phosphoribosyltransferase regulatory subunit</fullName>
    </recommendedName>
</protein>
<accession>A6VYL1</accession>
<sequence>MTLADRWLLPEGVDEALPEQAAKIEHLRRTLLNLHESWGYHLVIPPLLEYLDSLLTGAGSDLEIETFKVIDQLSGRLLGIRADFTSQVARIDAHCLKDDGVQRLSYCGSVLRTMPAGLDGTRSPIQLGAEIYGHGGVESDVEVLSLMLQTLSTAGLSNLVLDLGHVDIVSGVLAACNLNADQESKLIELYKAKDLPELDRYAEELGCLTDIQKQWLVGLPRLCGGKEVLKHATDLLGDVNESIRDAIVLLQKVSDSICQRFPKVGLHFDLSDLVSYSYHTGVIFAAYVPGHGNAIARGGRYNNIGQVFGRSRPATGFSTDVKALVALTDIVVNKPKTVLSPICSSDELWQKANSLRAEGYRVVEVLDDICAGDADFKLEFVDEAWQLMPVHN</sequence>
<organism>
    <name type="scientific">Marinomonas sp. (strain MWYL1)</name>
    <dbReference type="NCBI Taxonomy" id="400668"/>
    <lineage>
        <taxon>Bacteria</taxon>
        <taxon>Pseudomonadati</taxon>
        <taxon>Pseudomonadota</taxon>
        <taxon>Gammaproteobacteria</taxon>
        <taxon>Oceanospirillales</taxon>
        <taxon>Oceanospirillaceae</taxon>
        <taxon>Marinomonas</taxon>
    </lineage>
</organism>
<dbReference type="EMBL" id="CP000749">
    <property type="protein sequence ID" value="ABR71540.1"/>
    <property type="molecule type" value="Genomic_DNA"/>
</dbReference>
<dbReference type="SMR" id="A6VYL1"/>
<dbReference type="STRING" id="400668.Mmwyl1_2627"/>
<dbReference type="KEGG" id="mmw:Mmwyl1_2627"/>
<dbReference type="eggNOG" id="COG3705">
    <property type="taxonomic scope" value="Bacteria"/>
</dbReference>
<dbReference type="HOGENOM" id="CLU_025113_0_1_6"/>
<dbReference type="OrthoDB" id="9769617at2"/>
<dbReference type="UniPathway" id="UPA00031">
    <property type="reaction ID" value="UER00006"/>
</dbReference>
<dbReference type="GO" id="GO:0005737">
    <property type="term" value="C:cytoplasm"/>
    <property type="evidence" value="ECO:0007669"/>
    <property type="project" value="UniProtKB-SubCell"/>
</dbReference>
<dbReference type="GO" id="GO:0004821">
    <property type="term" value="F:histidine-tRNA ligase activity"/>
    <property type="evidence" value="ECO:0007669"/>
    <property type="project" value="TreeGrafter"/>
</dbReference>
<dbReference type="GO" id="GO:0006427">
    <property type="term" value="P:histidyl-tRNA aminoacylation"/>
    <property type="evidence" value="ECO:0007669"/>
    <property type="project" value="TreeGrafter"/>
</dbReference>
<dbReference type="GO" id="GO:0000105">
    <property type="term" value="P:L-histidine biosynthetic process"/>
    <property type="evidence" value="ECO:0007669"/>
    <property type="project" value="UniProtKB-UniRule"/>
</dbReference>
<dbReference type="CDD" id="cd00773">
    <property type="entry name" value="HisRS-like_core"/>
    <property type="match status" value="1"/>
</dbReference>
<dbReference type="Gene3D" id="3.30.930.10">
    <property type="entry name" value="Bira Bifunctional Protein, Domain 2"/>
    <property type="match status" value="1"/>
</dbReference>
<dbReference type="HAMAP" id="MF_00125">
    <property type="entry name" value="HisZ"/>
    <property type="match status" value="1"/>
</dbReference>
<dbReference type="InterPro" id="IPR045864">
    <property type="entry name" value="aa-tRNA-synth_II/BPL/LPL"/>
</dbReference>
<dbReference type="InterPro" id="IPR041715">
    <property type="entry name" value="HisRS-like_core"/>
</dbReference>
<dbReference type="InterPro" id="IPR004516">
    <property type="entry name" value="HisRS/HisZ"/>
</dbReference>
<dbReference type="InterPro" id="IPR004517">
    <property type="entry name" value="HisZ"/>
</dbReference>
<dbReference type="NCBIfam" id="TIGR00443">
    <property type="entry name" value="hisZ_biosyn_reg"/>
    <property type="match status" value="1"/>
</dbReference>
<dbReference type="NCBIfam" id="NF008935">
    <property type="entry name" value="PRK12292.1-1"/>
    <property type="match status" value="1"/>
</dbReference>
<dbReference type="NCBIfam" id="NF009086">
    <property type="entry name" value="PRK12421.1"/>
    <property type="match status" value="1"/>
</dbReference>
<dbReference type="PANTHER" id="PTHR43707:SF1">
    <property type="entry name" value="HISTIDINE--TRNA LIGASE, MITOCHONDRIAL-RELATED"/>
    <property type="match status" value="1"/>
</dbReference>
<dbReference type="PANTHER" id="PTHR43707">
    <property type="entry name" value="HISTIDYL-TRNA SYNTHETASE"/>
    <property type="match status" value="1"/>
</dbReference>
<dbReference type="Pfam" id="PF13393">
    <property type="entry name" value="tRNA-synt_His"/>
    <property type="match status" value="1"/>
</dbReference>
<dbReference type="PIRSF" id="PIRSF001549">
    <property type="entry name" value="His-tRNA_synth"/>
    <property type="match status" value="1"/>
</dbReference>
<dbReference type="SUPFAM" id="SSF55681">
    <property type="entry name" value="Class II aaRS and biotin synthetases"/>
    <property type="match status" value="1"/>
</dbReference>
<gene>
    <name evidence="1" type="primary">hisZ</name>
    <name type="ordered locus">Mmwyl1_2627</name>
</gene>